<protein>
    <recommendedName>
        <fullName>3-dehydroquinate synthase, chloroplastic</fullName>
        <ecNumber>4.2.3.4</ecNumber>
    </recommendedName>
</protein>
<sequence>MAANTISLSNVAASKNLNSFQSRAFIAPPTIFFPVASAKSKPGELSLSSTTLSRSRVRAGASQLMNEPLNDQRSISSPTVVEVDLGDRSYPIYIGAGLLDHSELLQRHVHGKRVLVVTNDRVAPLYLDKTIDALTRGNPNVTVESVILPDGEKYKDMDTLMKVFDKAIESRLDRRCTFVALGGGVIGDMCGYAAASYLRGVNFIQIPTTVMAQVDSSVGGKTGINHRLGKNLIGAFYQPQCVLVDTDTLNTLPDREMASGLAEVIKYGLIRDAEFFEWQEKNIEALLARDPAALAFAIKRSCENKADVVSQDEKESGLRATLNLGHTFGHAIETGFGYGEWLHGEAVAAGTVMAVDMSYRLGWIDESIVKRVNKILVRAKLPTTPPESMTVSMFKSIMAVDKKVADGLLRLILLKGPLGNCVFTGDYDREALDATLRAFSKS</sequence>
<name>DHQS_ARATH</name>
<comment type="function">
    <text evidence="1">Catalyzes the second step in the shikimate pathway.</text>
</comment>
<comment type="catalytic activity">
    <reaction>
        <text>7-phospho-2-dehydro-3-deoxy-D-arabino-heptonate = 3-dehydroquinate + phosphate</text>
        <dbReference type="Rhea" id="RHEA:21968"/>
        <dbReference type="ChEBI" id="CHEBI:32364"/>
        <dbReference type="ChEBI" id="CHEBI:43474"/>
        <dbReference type="ChEBI" id="CHEBI:58394"/>
        <dbReference type="EC" id="4.2.3.4"/>
    </reaction>
</comment>
<comment type="cofactor">
    <cofactor evidence="1">
        <name>a divalent metal cation</name>
        <dbReference type="ChEBI" id="CHEBI:60240"/>
    </cofactor>
</comment>
<comment type="cofactor">
    <cofactor evidence="1">
        <name>NAD(+)</name>
        <dbReference type="ChEBI" id="CHEBI:57540"/>
    </cofactor>
</comment>
<comment type="pathway">
    <text>Metabolic intermediate biosynthesis; chorismate biosynthesis; chorismate from D-erythrose 4-phosphate and phosphoenolpyruvate: step 2/7.</text>
</comment>
<comment type="subunit">
    <text evidence="1">Homodimer.</text>
</comment>
<comment type="subcellular location">
    <subcellularLocation>
        <location evidence="3">Plastid</location>
        <location evidence="3">Chloroplast</location>
    </subcellularLocation>
</comment>
<comment type="alternative products">
    <event type="alternative splicing"/>
    <isoform>
        <id>Q8VYV7-1</id>
        <name>1</name>
        <sequence type="displayed"/>
    </isoform>
    <isoform>
        <id>Q8VYV7-2</id>
        <name>2</name>
        <sequence type="described" ref="VSP_053869"/>
    </isoform>
</comment>
<comment type="similarity">
    <text evidence="3">Belongs to the sugar phosphate cyclases superfamily. Dehydroquinate synthase family.</text>
</comment>
<comment type="sequence caution" evidence="3">
    <conflict type="erroneous initiation">
        <sequence resource="EMBL-CDS" id="BAB10417"/>
    </conflict>
    <text>Truncated N-terminus.</text>
</comment>
<keyword id="KW-0007">Acetylation</keyword>
<keyword id="KW-0025">Alternative splicing</keyword>
<keyword id="KW-0028">Amino-acid biosynthesis</keyword>
<keyword id="KW-0057">Aromatic amino acid biosynthesis</keyword>
<keyword id="KW-0150">Chloroplast</keyword>
<keyword id="KW-0456">Lyase</keyword>
<keyword id="KW-0479">Metal-binding</keyword>
<keyword id="KW-0520">NAD</keyword>
<keyword id="KW-0934">Plastid</keyword>
<keyword id="KW-1185">Reference proteome</keyword>
<keyword id="KW-0809">Transit peptide</keyword>
<proteinExistence type="evidence at protein level"/>
<organism>
    <name type="scientific">Arabidopsis thaliana</name>
    <name type="common">Mouse-ear cress</name>
    <dbReference type="NCBI Taxonomy" id="3702"/>
    <lineage>
        <taxon>Eukaryota</taxon>
        <taxon>Viridiplantae</taxon>
        <taxon>Streptophyta</taxon>
        <taxon>Embryophyta</taxon>
        <taxon>Tracheophyta</taxon>
        <taxon>Spermatophyta</taxon>
        <taxon>Magnoliopsida</taxon>
        <taxon>eudicotyledons</taxon>
        <taxon>Gunneridae</taxon>
        <taxon>Pentapetalae</taxon>
        <taxon>rosids</taxon>
        <taxon>malvids</taxon>
        <taxon>Brassicales</taxon>
        <taxon>Brassicaceae</taxon>
        <taxon>Camelineae</taxon>
        <taxon>Arabidopsis</taxon>
    </lineage>
</organism>
<gene>
    <name type="primary">DHQS</name>
    <name type="synonym">AROB</name>
    <name type="ordered locus">At5g66120</name>
    <name type="ORF">K2A18.20</name>
</gene>
<feature type="transit peptide" description="Chloroplast" evidence="2 4">
    <location>
        <begin position="1"/>
        <end position="58"/>
    </location>
</feature>
<feature type="chain" id="PRO_0000425860" description="3-dehydroquinate synthase, chloroplastic">
    <location>
        <begin position="59"/>
        <end position="442"/>
    </location>
</feature>
<feature type="binding site" evidence="1">
    <location>
        <position position="119"/>
    </location>
    <ligand>
        <name>NAD(+)</name>
        <dbReference type="ChEBI" id="CHEBI:57540"/>
    </ligand>
</feature>
<feature type="binding site" evidence="1">
    <location>
        <begin position="150"/>
        <end position="152"/>
    </location>
    <ligand>
        <name>NAD(+)</name>
        <dbReference type="ChEBI" id="CHEBI:57540"/>
    </ligand>
</feature>
<feature type="binding site" evidence="1">
    <location>
        <position position="155"/>
    </location>
    <ligand>
        <name>NAD(+)</name>
        <dbReference type="ChEBI" id="CHEBI:57540"/>
    </ligand>
</feature>
<feature type="binding site" evidence="1">
    <location>
        <begin position="183"/>
        <end position="188"/>
    </location>
    <ligand>
        <name>NAD(+)</name>
        <dbReference type="ChEBI" id="CHEBI:57540"/>
    </ligand>
</feature>
<feature type="binding site" evidence="1">
    <location>
        <begin position="208"/>
        <end position="209"/>
    </location>
    <ligand>
        <name>NAD(+)</name>
        <dbReference type="ChEBI" id="CHEBI:57540"/>
    </ligand>
</feature>
<feature type="binding site" evidence="1">
    <location>
        <position position="221"/>
    </location>
    <ligand>
        <name>NAD(+)</name>
        <dbReference type="ChEBI" id="CHEBI:57540"/>
    </ligand>
</feature>
<feature type="binding site" evidence="1">
    <location>
        <position position="230"/>
    </location>
    <ligand>
        <name>NAD(+)</name>
        <dbReference type="ChEBI" id="CHEBI:57540"/>
    </ligand>
</feature>
<feature type="binding site" evidence="1">
    <location>
        <begin position="248"/>
        <end position="251"/>
    </location>
    <ligand>
        <name>NAD(+)</name>
        <dbReference type="ChEBI" id="CHEBI:57540"/>
    </ligand>
</feature>
<feature type="binding site" evidence="1">
    <location>
        <position position="263"/>
    </location>
    <ligand>
        <name>a divalent metal cation</name>
        <dbReference type="ChEBI" id="CHEBI:60240"/>
    </ligand>
</feature>
<feature type="binding site" evidence="1">
    <location>
        <position position="305"/>
    </location>
    <ligand>
        <name>NAD(+)</name>
        <dbReference type="ChEBI" id="CHEBI:57540"/>
    </ligand>
</feature>
<feature type="binding site" evidence="1">
    <location>
        <position position="326"/>
    </location>
    <ligand>
        <name>a divalent metal cation</name>
        <dbReference type="ChEBI" id="CHEBI:60240"/>
    </ligand>
</feature>
<feature type="binding site" evidence="1">
    <location>
        <position position="343"/>
    </location>
    <ligand>
        <name>a divalent metal cation</name>
        <dbReference type="ChEBI" id="CHEBI:60240"/>
    </ligand>
</feature>
<feature type="modified residue" description="N-acetylalanine" evidence="4">
    <location>
        <position position="59"/>
    </location>
</feature>
<feature type="splice variant" id="VSP_053869" description="In isoform 2." evidence="3">
    <original>MAANTISLSNVAASKNLNSFQSRAFIAPPTIFFPVASAKSKPGELSLSSTTLSRSRVRAGASQLMNEPLNDQRSISSPTVVEVDLGDRSYPIYIGAGLLDHSELLQ</original>
    <variation>MF</variation>
    <location>
        <begin position="1"/>
        <end position="106"/>
    </location>
</feature>
<feature type="sequence conflict" description="In Ref. 4; AAM61355." evidence="3" ref="4">
    <original>G</original>
    <variation>D</variation>
    <location>
        <position position="260"/>
    </location>
</feature>
<dbReference type="EC" id="4.2.3.4"/>
<dbReference type="EMBL" id="AB011474">
    <property type="protein sequence ID" value="BAB10417.1"/>
    <property type="status" value="ALT_INIT"/>
    <property type="molecule type" value="Genomic_DNA"/>
</dbReference>
<dbReference type="EMBL" id="CP002688">
    <property type="protein sequence ID" value="AED98161.1"/>
    <property type="molecule type" value="Genomic_DNA"/>
</dbReference>
<dbReference type="EMBL" id="CP002688">
    <property type="protein sequence ID" value="AED98162.1"/>
    <property type="molecule type" value="Genomic_DNA"/>
</dbReference>
<dbReference type="EMBL" id="AY069891">
    <property type="protein sequence ID" value="AAL47443.1"/>
    <property type="molecule type" value="mRNA"/>
</dbReference>
<dbReference type="EMBL" id="AY142020">
    <property type="protein sequence ID" value="AAM98284.1"/>
    <property type="molecule type" value="mRNA"/>
</dbReference>
<dbReference type="EMBL" id="AY084788">
    <property type="protein sequence ID" value="AAM61355.1"/>
    <property type="molecule type" value="mRNA"/>
</dbReference>
<dbReference type="RefSeq" id="NP_569029.1">
    <molecule id="Q8VYV7-1"/>
    <property type="nucleotide sequence ID" value="NM_126010.3"/>
</dbReference>
<dbReference type="RefSeq" id="NP_851279.1">
    <molecule id="Q8VYV7-2"/>
    <property type="nucleotide sequence ID" value="NM_180948.2"/>
</dbReference>
<dbReference type="SMR" id="Q8VYV7"/>
<dbReference type="BioGRID" id="21986">
    <property type="interactions" value="3"/>
</dbReference>
<dbReference type="FunCoup" id="Q8VYV7">
    <property type="interactions" value="1131"/>
</dbReference>
<dbReference type="STRING" id="3702.Q8VYV7"/>
<dbReference type="iPTMnet" id="Q8VYV7"/>
<dbReference type="PaxDb" id="3702-AT5G66120.2"/>
<dbReference type="ProteomicsDB" id="224056">
    <molecule id="Q8VYV7-1"/>
</dbReference>
<dbReference type="EnsemblPlants" id="AT5G66120.1">
    <molecule id="Q8VYV7-2"/>
    <property type="protein sequence ID" value="AT5G66120.1"/>
    <property type="gene ID" value="AT5G66120"/>
</dbReference>
<dbReference type="EnsemblPlants" id="AT5G66120.2">
    <molecule id="Q8VYV7-1"/>
    <property type="protein sequence ID" value="AT5G66120.2"/>
    <property type="gene ID" value="AT5G66120"/>
</dbReference>
<dbReference type="GeneID" id="836744"/>
<dbReference type="Gramene" id="AT5G66120.1">
    <molecule id="Q8VYV7-2"/>
    <property type="protein sequence ID" value="AT5G66120.1"/>
    <property type="gene ID" value="AT5G66120"/>
</dbReference>
<dbReference type="Gramene" id="AT5G66120.2">
    <molecule id="Q8VYV7-1"/>
    <property type="protein sequence ID" value="AT5G66120.2"/>
    <property type="gene ID" value="AT5G66120"/>
</dbReference>
<dbReference type="KEGG" id="ath:AT5G66120"/>
<dbReference type="Araport" id="AT5G66120"/>
<dbReference type="TAIR" id="AT5G66120"/>
<dbReference type="eggNOG" id="KOG0692">
    <property type="taxonomic scope" value="Eukaryota"/>
</dbReference>
<dbReference type="HOGENOM" id="CLU_001201_0_2_1"/>
<dbReference type="InParanoid" id="Q8VYV7"/>
<dbReference type="OMA" id="IAIGMRM"/>
<dbReference type="PhylomeDB" id="Q8VYV7"/>
<dbReference type="BioCyc" id="ARA:AT5G66120-MONOMER"/>
<dbReference type="UniPathway" id="UPA00053">
    <property type="reaction ID" value="UER00085"/>
</dbReference>
<dbReference type="PRO" id="PR:Q8VYV7"/>
<dbReference type="Proteomes" id="UP000006548">
    <property type="component" value="Chromosome 5"/>
</dbReference>
<dbReference type="ExpressionAtlas" id="Q8VYV7">
    <property type="expression patterns" value="baseline and differential"/>
</dbReference>
<dbReference type="GO" id="GO:0009507">
    <property type="term" value="C:chloroplast"/>
    <property type="evidence" value="ECO:0007005"/>
    <property type="project" value="TAIR"/>
</dbReference>
<dbReference type="GO" id="GO:0009570">
    <property type="term" value="C:chloroplast stroma"/>
    <property type="evidence" value="ECO:0007005"/>
    <property type="project" value="TAIR"/>
</dbReference>
<dbReference type="GO" id="GO:0005768">
    <property type="term" value="C:endosome"/>
    <property type="evidence" value="ECO:0007005"/>
    <property type="project" value="TAIR"/>
</dbReference>
<dbReference type="GO" id="GO:0005794">
    <property type="term" value="C:Golgi apparatus"/>
    <property type="evidence" value="ECO:0007005"/>
    <property type="project" value="TAIR"/>
</dbReference>
<dbReference type="GO" id="GO:0005802">
    <property type="term" value="C:trans-Golgi network"/>
    <property type="evidence" value="ECO:0007005"/>
    <property type="project" value="TAIR"/>
</dbReference>
<dbReference type="GO" id="GO:0003856">
    <property type="term" value="F:3-dehydroquinate synthase activity"/>
    <property type="evidence" value="ECO:0007669"/>
    <property type="project" value="UniProtKB-EC"/>
</dbReference>
<dbReference type="GO" id="GO:0046872">
    <property type="term" value="F:metal ion binding"/>
    <property type="evidence" value="ECO:0007669"/>
    <property type="project" value="UniProtKB-KW"/>
</dbReference>
<dbReference type="GO" id="GO:0008652">
    <property type="term" value="P:amino acid biosynthetic process"/>
    <property type="evidence" value="ECO:0007669"/>
    <property type="project" value="UniProtKB-KW"/>
</dbReference>
<dbReference type="GO" id="GO:0009073">
    <property type="term" value="P:aromatic amino acid family biosynthetic process"/>
    <property type="evidence" value="ECO:0007669"/>
    <property type="project" value="UniProtKB-KW"/>
</dbReference>
<dbReference type="GO" id="GO:0009423">
    <property type="term" value="P:chorismate biosynthetic process"/>
    <property type="evidence" value="ECO:0007669"/>
    <property type="project" value="UniProtKB-UniPathway"/>
</dbReference>
<dbReference type="CDD" id="cd08195">
    <property type="entry name" value="DHQS"/>
    <property type="match status" value="1"/>
</dbReference>
<dbReference type="FunFam" id="1.20.1090.10:FF:000002">
    <property type="entry name" value="3-dehydroquinate synthase"/>
    <property type="match status" value="1"/>
</dbReference>
<dbReference type="FunFam" id="3.40.50.1970:FF:000001">
    <property type="entry name" value="3-dehydroquinate synthase"/>
    <property type="match status" value="1"/>
</dbReference>
<dbReference type="Gene3D" id="3.40.50.1970">
    <property type="match status" value="1"/>
</dbReference>
<dbReference type="Gene3D" id="1.20.1090.10">
    <property type="entry name" value="Dehydroquinate synthase-like - alpha domain"/>
    <property type="match status" value="1"/>
</dbReference>
<dbReference type="HAMAP" id="MF_00110">
    <property type="entry name" value="DHQ_synthase"/>
    <property type="match status" value="1"/>
</dbReference>
<dbReference type="InterPro" id="IPR050071">
    <property type="entry name" value="Dehydroquinate_synthase"/>
</dbReference>
<dbReference type="InterPro" id="IPR016037">
    <property type="entry name" value="DHQ_synth_AroB"/>
</dbReference>
<dbReference type="InterPro" id="IPR030960">
    <property type="entry name" value="DHQS/DOIS_N"/>
</dbReference>
<dbReference type="InterPro" id="IPR056179">
    <property type="entry name" value="DHQS_C"/>
</dbReference>
<dbReference type="NCBIfam" id="TIGR01357">
    <property type="entry name" value="aroB"/>
    <property type="match status" value="1"/>
</dbReference>
<dbReference type="PANTHER" id="PTHR43622">
    <property type="entry name" value="3-DEHYDROQUINATE SYNTHASE"/>
    <property type="match status" value="1"/>
</dbReference>
<dbReference type="PANTHER" id="PTHR43622:SF7">
    <property type="entry name" value="3-DEHYDROQUINATE SYNTHASE, CHLOROPLASTIC"/>
    <property type="match status" value="1"/>
</dbReference>
<dbReference type="Pfam" id="PF01761">
    <property type="entry name" value="DHQ_synthase"/>
    <property type="match status" value="1"/>
</dbReference>
<dbReference type="Pfam" id="PF24621">
    <property type="entry name" value="DHQS_C"/>
    <property type="match status" value="1"/>
</dbReference>
<dbReference type="SUPFAM" id="SSF56796">
    <property type="entry name" value="Dehydroquinate synthase-like"/>
    <property type="match status" value="1"/>
</dbReference>
<accession>Q8VYV7</accession>
<accession>F4JZ33</accession>
<accession>Q8LFK9</accession>
<accession>Q9FKX0</accession>
<evidence type="ECO:0000250" key="1"/>
<evidence type="ECO:0000255" key="2"/>
<evidence type="ECO:0000305" key="3"/>
<evidence type="ECO:0007744" key="4">
    <source>
    </source>
</evidence>
<reference key="1">
    <citation type="journal article" date="1998" name="DNA Res.">
        <title>Structural analysis of Arabidopsis thaliana chromosome 5. V. Sequence features of the regions of 1,381,565 bp covered by twenty one physically assigned P1 and TAC clones.</title>
        <authorList>
            <person name="Kaneko T."/>
            <person name="Kotani H."/>
            <person name="Nakamura Y."/>
            <person name="Sato S."/>
            <person name="Asamizu E."/>
            <person name="Miyajima N."/>
            <person name="Tabata S."/>
        </authorList>
    </citation>
    <scope>NUCLEOTIDE SEQUENCE [LARGE SCALE GENOMIC DNA]</scope>
    <source>
        <strain>cv. Columbia</strain>
    </source>
</reference>
<reference key="2">
    <citation type="journal article" date="2017" name="Plant J.">
        <title>Araport11: a complete reannotation of the Arabidopsis thaliana reference genome.</title>
        <authorList>
            <person name="Cheng C.Y."/>
            <person name="Krishnakumar V."/>
            <person name="Chan A.P."/>
            <person name="Thibaud-Nissen F."/>
            <person name="Schobel S."/>
            <person name="Town C.D."/>
        </authorList>
    </citation>
    <scope>GENOME REANNOTATION</scope>
    <source>
        <strain>cv. Columbia</strain>
    </source>
</reference>
<reference key="3">
    <citation type="journal article" date="2003" name="Science">
        <title>Empirical analysis of transcriptional activity in the Arabidopsis genome.</title>
        <authorList>
            <person name="Yamada K."/>
            <person name="Lim J."/>
            <person name="Dale J.M."/>
            <person name="Chen H."/>
            <person name="Shinn P."/>
            <person name="Palm C.J."/>
            <person name="Southwick A.M."/>
            <person name="Wu H.C."/>
            <person name="Kim C.J."/>
            <person name="Nguyen M."/>
            <person name="Pham P.K."/>
            <person name="Cheuk R.F."/>
            <person name="Karlin-Newmann G."/>
            <person name="Liu S.X."/>
            <person name="Lam B."/>
            <person name="Sakano H."/>
            <person name="Wu T."/>
            <person name="Yu G."/>
            <person name="Miranda M."/>
            <person name="Quach H.L."/>
            <person name="Tripp M."/>
            <person name="Chang C.H."/>
            <person name="Lee J.M."/>
            <person name="Toriumi M.J."/>
            <person name="Chan M.M."/>
            <person name="Tang C.C."/>
            <person name="Onodera C.S."/>
            <person name="Deng J.M."/>
            <person name="Akiyama K."/>
            <person name="Ansari Y."/>
            <person name="Arakawa T."/>
            <person name="Banh J."/>
            <person name="Banno F."/>
            <person name="Bowser L."/>
            <person name="Brooks S.Y."/>
            <person name="Carninci P."/>
            <person name="Chao Q."/>
            <person name="Choy N."/>
            <person name="Enju A."/>
            <person name="Goldsmith A.D."/>
            <person name="Gurjal M."/>
            <person name="Hansen N.F."/>
            <person name="Hayashizaki Y."/>
            <person name="Johnson-Hopson C."/>
            <person name="Hsuan V.W."/>
            <person name="Iida K."/>
            <person name="Karnes M."/>
            <person name="Khan S."/>
            <person name="Koesema E."/>
            <person name="Ishida J."/>
            <person name="Jiang P.X."/>
            <person name="Jones T."/>
            <person name="Kawai J."/>
            <person name="Kamiya A."/>
            <person name="Meyers C."/>
            <person name="Nakajima M."/>
            <person name="Narusaka M."/>
            <person name="Seki M."/>
            <person name="Sakurai T."/>
            <person name="Satou M."/>
            <person name="Tamse R."/>
            <person name="Vaysberg M."/>
            <person name="Wallender E.K."/>
            <person name="Wong C."/>
            <person name="Yamamura Y."/>
            <person name="Yuan S."/>
            <person name="Shinozaki K."/>
            <person name="Davis R.W."/>
            <person name="Theologis A."/>
            <person name="Ecker J.R."/>
        </authorList>
    </citation>
    <scope>NUCLEOTIDE SEQUENCE [LARGE SCALE MRNA]</scope>
    <source>
        <strain>cv. Columbia</strain>
    </source>
</reference>
<reference key="4">
    <citation type="submission" date="2002-03" db="EMBL/GenBank/DDBJ databases">
        <title>Full-length cDNA from Arabidopsis thaliana.</title>
        <authorList>
            <person name="Brover V.V."/>
            <person name="Troukhan M.E."/>
            <person name="Alexandrov N.A."/>
            <person name="Lu Y.-P."/>
            <person name="Flavell R.B."/>
            <person name="Feldmann K.A."/>
        </authorList>
    </citation>
    <scope>NUCLEOTIDE SEQUENCE [LARGE SCALE MRNA]</scope>
</reference>
<reference key="5">
    <citation type="journal article" date="2012" name="Mol. Cell. Proteomics">
        <title>Comparative large-scale characterisation of plant vs. mammal proteins reveals similar and idiosyncratic N-alpha acetylation features.</title>
        <authorList>
            <person name="Bienvenut W.V."/>
            <person name="Sumpton D."/>
            <person name="Martinez A."/>
            <person name="Lilla S."/>
            <person name="Espagne C."/>
            <person name="Meinnel T."/>
            <person name="Giglione C."/>
        </authorList>
    </citation>
    <scope>ACETYLATION [LARGE SCALE ANALYSIS] AT ALA-59</scope>
    <scope>CLEAVAGE OF TRANSIT PEPTIDE [LARGE SCALE ANALYSIS] AFTER ARG-58</scope>
    <scope>IDENTIFICATION BY MASS SPECTROMETRY [LARGE SCALE ANALYSIS]</scope>
</reference>